<gene>
    <name type="primary">agaB</name>
</gene>
<feature type="chain" id="PRO_0000057698" description="Beta-agarase B">
    <location>
        <begin position="1"/>
        <end position="955"/>
    </location>
</feature>
<dbReference type="EC" id="3.2.1.81"/>
<dbReference type="EMBL" id="D21202">
    <property type="protein sequence ID" value="BAA04744.1"/>
    <property type="molecule type" value="Genomic_DNA"/>
</dbReference>
<dbReference type="PIR" id="S46651">
    <property type="entry name" value="S46651"/>
</dbReference>
<dbReference type="SMR" id="P48840"/>
<dbReference type="CAZy" id="GH50">
    <property type="family name" value="Glycoside Hydrolase Family 50"/>
</dbReference>
<dbReference type="GO" id="GO:0009341">
    <property type="term" value="C:beta-galactosidase complex"/>
    <property type="evidence" value="ECO:0007669"/>
    <property type="project" value="InterPro"/>
</dbReference>
<dbReference type="GO" id="GO:0033916">
    <property type="term" value="F:beta-agarase activity"/>
    <property type="evidence" value="ECO:0007669"/>
    <property type="project" value="UniProtKB-EC"/>
</dbReference>
<dbReference type="GO" id="GO:0004565">
    <property type="term" value="F:beta-galactosidase activity"/>
    <property type="evidence" value="ECO:0007669"/>
    <property type="project" value="InterPro"/>
</dbReference>
<dbReference type="GO" id="GO:0005975">
    <property type="term" value="P:carbohydrate metabolic process"/>
    <property type="evidence" value="ECO:0007669"/>
    <property type="project" value="InterPro"/>
</dbReference>
<dbReference type="Gene3D" id="2.60.120.430">
    <property type="entry name" value="Galactose-binding lectin"/>
    <property type="match status" value="2"/>
</dbReference>
<dbReference type="Gene3D" id="3.20.20.80">
    <property type="entry name" value="Glycosidases"/>
    <property type="match status" value="1"/>
</dbReference>
<dbReference type="InterPro" id="IPR040669">
    <property type="entry name" value="Agarase_CBM"/>
</dbReference>
<dbReference type="InterPro" id="IPR013529">
    <property type="entry name" value="Glyco_hydro_42_N"/>
</dbReference>
<dbReference type="InterPro" id="IPR017853">
    <property type="entry name" value="Glycoside_hydrolase_SF"/>
</dbReference>
<dbReference type="Pfam" id="PF17992">
    <property type="entry name" value="Agarase_CBM"/>
    <property type="match status" value="1"/>
</dbReference>
<dbReference type="Pfam" id="PF02449">
    <property type="entry name" value="Glyco_hydro_42"/>
    <property type="match status" value="1"/>
</dbReference>
<dbReference type="SUPFAM" id="SSF51445">
    <property type="entry name" value="(Trans)glycosidases"/>
    <property type="match status" value="1"/>
</dbReference>
<dbReference type="PROSITE" id="PS51257">
    <property type="entry name" value="PROKAR_LIPOPROTEIN"/>
    <property type="match status" value="1"/>
</dbReference>
<reference key="1">
    <citation type="journal article" date="1994" name="Biochim. Biophys. Acta">
        <title>Sequence analysis of the agaB gene encoding a new beta-agarase from Vibrio sp. strain JT0107.</title>
        <authorList>
            <person name="Sugano Y."/>
            <person name="Matsumoto T."/>
            <person name="Noma M."/>
        </authorList>
    </citation>
    <scope>NUCLEOTIDE SEQUENCE [GENOMIC DNA]</scope>
</reference>
<keyword id="KW-0326">Glycosidase</keyword>
<keyword id="KW-0378">Hydrolase</keyword>
<accession>P48840</accession>
<organism>
    <name type="scientific">Vibrio sp. (strain JT0107)</name>
    <dbReference type="NCBI Taxonomy" id="47913"/>
    <lineage>
        <taxon>Bacteria</taxon>
        <taxon>Pseudomonadati</taxon>
        <taxon>Pseudomonadota</taxon>
        <taxon>Gammaproteobacteria</taxon>
        <taxon>Vibrionales</taxon>
        <taxon>Vibrionaceae</taxon>
        <taxon>Vibrio</taxon>
    </lineage>
</organism>
<protein>
    <recommendedName>
        <fullName>Beta-agarase B</fullName>
        <ecNumber>3.2.1.81</ecNumber>
    </recommendedName>
</protein>
<sequence>MVEVMKFTKNKIAALLSLTLLGVYGCGSTPSSSDAEGAVEDVGGTIPDFESAAFFKKVKKDHRKAEVVSDQGVTSGSSALKVNFDSVSEANKFKYWPNVKVHPDSGFWNWNAKGSLSLDITNPTDSPANIILKLADNVGVMGSGDNQLNYAVNVPAGETVPVEMLFNGTKRKLDGYWGGEKINLRNIVEFQIFVQGPMDAQTVIIDNFNLVDATGDFIEASGQEVKVSGPIPTVASITSFDEGQPTFVAFDRSAAATVTELKTDMGGLLAVKLAATNAYPNITFKAPQPWDWSEYGDFSLAFDLESKADEPLQLFVRVDDAENENWGGTANGVVDSMSSYVTLAPGDDGTFYLPLGQTGSQIVSGMRAEPPKKSYNAQAISYGWGEKSLDTSNIVSFQLYLQNPTKDAEFNIKSVRLIPNIDADATRYEGLIDQYGQFTGSEWPKKITEDEELETMGKLAKMSLKSTSQMPGRSIYGGWADGPKLKGTGFFRTEKVDGKWSLVDPQGNLFFATGVDNIRMDDTVTITGHDFADKDKRSGKEVASEVRRSMFTWLPEDDDVLAENYDYANWVHSGALKKGEVFSFYGANLQRKYGGTFSEAEKVWKDITIDRMVDWGFTTLGNWADPMFYDNKKVAYVANGWIFGDHARISTGNDYWGPIHDPFDPEFVNSVKAMTKKLMTEVDKNDPWMMGVFVDNEISWGNTKNDANHYGLVVNALSYDMKKSPAKAAFTEHLKEKYWAIEDLNTSWGVKVASWAEFEKSFDHRSRLSKNMKKDYAEMLEMLSAKYFSTVRAELKKVLPNHLYLGAPFADWGVTPEIAKGAAPYVDVMSYNLYAEDLNSKGDWSKLAELDKPSIIGEFHFGSTDSGLFHGGIVSAASQQDRAKKYTNYMNSIADNPYFVGAHWFQYIDSPTTGRAWDGENYNVGFVSITDTPYVPLVEAAKKFNQDVYMLRYKK</sequence>
<proteinExistence type="inferred from homology"/>
<name>AGAB_VIBS7</name>
<evidence type="ECO:0000305" key="1"/>
<comment type="function">
    <text>Hydrolyzes agarose to yield predominantly neoagarotetraose and neoagarohexaose.</text>
</comment>
<comment type="catalytic activity">
    <reaction>
        <text>Hydrolysis of (1-&gt;4)-beta-D-galactosidic linkages in agarose, giving the tetramer as the predominant product.</text>
        <dbReference type="EC" id="3.2.1.81"/>
    </reaction>
</comment>
<comment type="similarity">
    <text evidence="1">Belongs to the glycosyl hydrolase 50 family.</text>
</comment>